<name>SBT25_ARATH</name>
<comment type="tissue specificity">
    <text evidence="4">Expressed in roots, leaves and flowers of mature plants.</text>
</comment>
<comment type="induction">
    <text evidence="4">By methyl jasmonate.</text>
</comment>
<comment type="similarity">
    <text evidence="7">Belongs to the peptidase S8 family.</text>
</comment>
<reference key="1">
    <citation type="journal article" date="1999" name="Nature">
        <title>Sequence and analysis of chromosome 2 of the plant Arabidopsis thaliana.</title>
        <authorList>
            <person name="Lin X."/>
            <person name="Kaul S."/>
            <person name="Rounsley S.D."/>
            <person name="Shea T.P."/>
            <person name="Benito M.-I."/>
            <person name="Town C.D."/>
            <person name="Fujii C.Y."/>
            <person name="Mason T.M."/>
            <person name="Bowman C.L."/>
            <person name="Barnstead M.E."/>
            <person name="Feldblyum T.V."/>
            <person name="Buell C.R."/>
            <person name="Ketchum K.A."/>
            <person name="Lee J.J."/>
            <person name="Ronning C.M."/>
            <person name="Koo H.L."/>
            <person name="Moffat K.S."/>
            <person name="Cronin L.A."/>
            <person name="Shen M."/>
            <person name="Pai G."/>
            <person name="Van Aken S."/>
            <person name="Umayam L."/>
            <person name="Tallon L.J."/>
            <person name="Gill J.E."/>
            <person name="Adams M.D."/>
            <person name="Carrera A.J."/>
            <person name="Creasy T.H."/>
            <person name="Goodman H.M."/>
            <person name="Somerville C.R."/>
            <person name="Copenhaver G.P."/>
            <person name="Preuss D."/>
            <person name="Nierman W.C."/>
            <person name="White O."/>
            <person name="Eisen J.A."/>
            <person name="Salzberg S.L."/>
            <person name="Fraser C.M."/>
            <person name="Venter J.C."/>
        </authorList>
    </citation>
    <scope>NUCLEOTIDE SEQUENCE [LARGE SCALE GENOMIC DNA]</scope>
    <source>
        <strain>cv. Columbia</strain>
    </source>
</reference>
<reference key="2">
    <citation type="journal article" date="2017" name="Plant J.">
        <title>Araport11: a complete reannotation of the Arabidopsis thaliana reference genome.</title>
        <authorList>
            <person name="Cheng C.Y."/>
            <person name="Krishnakumar V."/>
            <person name="Chan A.P."/>
            <person name="Thibaud-Nissen F."/>
            <person name="Schobel S."/>
            <person name="Town C.D."/>
        </authorList>
    </citation>
    <scope>GENOME REANNOTATION</scope>
    <source>
        <strain>cv. Columbia</strain>
    </source>
</reference>
<reference key="3">
    <citation type="journal article" date="2003" name="Science">
        <title>Empirical analysis of transcriptional activity in the Arabidopsis genome.</title>
        <authorList>
            <person name="Yamada K."/>
            <person name="Lim J."/>
            <person name="Dale J.M."/>
            <person name="Chen H."/>
            <person name="Shinn P."/>
            <person name="Palm C.J."/>
            <person name="Southwick A.M."/>
            <person name="Wu H.C."/>
            <person name="Kim C.J."/>
            <person name="Nguyen M."/>
            <person name="Pham P.K."/>
            <person name="Cheuk R.F."/>
            <person name="Karlin-Newmann G."/>
            <person name="Liu S.X."/>
            <person name="Lam B."/>
            <person name="Sakano H."/>
            <person name="Wu T."/>
            <person name="Yu G."/>
            <person name="Miranda M."/>
            <person name="Quach H.L."/>
            <person name="Tripp M."/>
            <person name="Chang C.H."/>
            <person name="Lee J.M."/>
            <person name="Toriumi M.J."/>
            <person name="Chan M.M."/>
            <person name="Tang C.C."/>
            <person name="Onodera C.S."/>
            <person name="Deng J.M."/>
            <person name="Akiyama K."/>
            <person name="Ansari Y."/>
            <person name="Arakawa T."/>
            <person name="Banh J."/>
            <person name="Banno F."/>
            <person name="Bowser L."/>
            <person name="Brooks S.Y."/>
            <person name="Carninci P."/>
            <person name="Chao Q."/>
            <person name="Choy N."/>
            <person name="Enju A."/>
            <person name="Goldsmith A.D."/>
            <person name="Gurjal M."/>
            <person name="Hansen N.F."/>
            <person name="Hayashizaki Y."/>
            <person name="Johnson-Hopson C."/>
            <person name="Hsuan V.W."/>
            <person name="Iida K."/>
            <person name="Karnes M."/>
            <person name="Khan S."/>
            <person name="Koesema E."/>
            <person name="Ishida J."/>
            <person name="Jiang P.X."/>
            <person name="Jones T."/>
            <person name="Kawai J."/>
            <person name="Kamiya A."/>
            <person name="Meyers C."/>
            <person name="Nakajima M."/>
            <person name="Narusaka M."/>
            <person name="Seki M."/>
            <person name="Sakurai T."/>
            <person name="Satou M."/>
            <person name="Tamse R."/>
            <person name="Vaysberg M."/>
            <person name="Wallender E.K."/>
            <person name="Wong C."/>
            <person name="Yamamura Y."/>
            <person name="Yuan S."/>
            <person name="Shinozaki K."/>
            <person name="Davis R.W."/>
            <person name="Theologis A."/>
            <person name="Ecker J.R."/>
        </authorList>
    </citation>
    <scope>NUCLEOTIDE SEQUENCE [LARGE SCALE MRNA]</scope>
    <source>
        <strain>cv. Columbia</strain>
    </source>
</reference>
<reference key="4">
    <citation type="journal article" date="2003" name="Physiol. Plantarum">
        <title>Expression of subtilisin-like serine proteases in Arabidopsis thaliana is cell-specific and responds to jasmonic acid and heavy metals with developmental differences.</title>
        <authorList>
            <person name="Golldack D."/>
            <person name="Vera P."/>
            <person name="Dietz K.J."/>
        </authorList>
    </citation>
    <scope>TISSUE SPECIFICITY</scope>
    <scope>INDUCTION BY METHYL JASMONATE</scope>
</reference>
<reference key="5">
    <citation type="journal article" date="2005" name="PLoS Comput. Biol.">
        <title>Inferring hypotheses on functional relationships of genes: Analysis of the Arabidopsis thaliana subtilase gene family.</title>
        <authorList>
            <person name="Rautengarten C."/>
            <person name="Steinhauser D."/>
            <person name="Bussis D."/>
            <person name="Stintzi A."/>
            <person name="Schaller A."/>
            <person name="Kopka J."/>
            <person name="Altmann T."/>
        </authorList>
    </citation>
    <scope>GENE FAMILY</scope>
    <scope>NOMENCLATURE</scope>
</reference>
<feature type="signal peptide" evidence="1">
    <location>
        <begin position="1"/>
        <end position="19"/>
    </location>
</feature>
<feature type="chain" id="PRO_0000431967" description="Subtilisin-like protease SBT2.5" evidence="1">
    <location>
        <begin position="20"/>
        <end position="815"/>
    </location>
</feature>
<feature type="domain" description="Inhibitor I9" evidence="1">
    <location>
        <begin position="21"/>
        <end position="124"/>
    </location>
</feature>
<feature type="domain" description="Peptidase S8" evidence="3">
    <location>
        <begin position="120"/>
        <end position="671"/>
    </location>
</feature>
<feature type="domain" description="PA" evidence="1">
    <location>
        <begin position="397"/>
        <end position="501"/>
    </location>
</feature>
<feature type="active site" description="Charge relay system" evidence="3">
    <location>
        <position position="160"/>
    </location>
</feature>
<feature type="active site" description="Charge relay system" evidence="3">
    <location>
        <position position="234"/>
    </location>
</feature>
<feature type="active site" description="Charge relay system" evidence="3">
    <location>
        <position position="596"/>
    </location>
</feature>
<feature type="glycosylation site" description="N-linked (GlcNAc...) asparagine" evidence="2">
    <location>
        <position position="503"/>
    </location>
</feature>
<feature type="glycosylation site" description="N-linked (GlcNAc...) asparagine" evidence="2">
    <location>
        <position position="577"/>
    </location>
</feature>
<feature type="glycosylation site" description="N-linked (GlcNAc...) asparagine" evidence="2">
    <location>
        <position position="701"/>
    </location>
</feature>
<keyword id="KW-0325">Glycoprotein</keyword>
<keyword id="KW-0378">Hydrolase</keyword>
<keyword id="KW-0645">Protease</keyword>
<keyword id="KW-1185">Reference proteome</keyword>
<keyword id="KW-0720">Serine protease</keyword>
<keyword id="KW-0732">Signal</keyword>
<organism>
    <name type="scientific">Arabidopsis thaliana</name>
    <name type="common">Mouse-ear cress</name>
    <dbReference type="NCBI Taxonomy" id="3702"/>
    <lineage>
        <taxon>Eukaryota</taxon>
        <taxon>Viridiplantae</taxon>
        <taxon>Streptophyta</taxon>
        <taxon>Embryophyta</taxon>
        <taxon>Tracheophyta</taxon>
        <taxon>Spermatophyta</taxon>
        <taxon>Magnoliopsida</taxon>
        <taxon>eudicotyledons</taxon>
        <taxon>Gunneridae</taxon>
        <taxon>Pentapetalae</taxon>
        <taxon>rosids</taxon>
        <taxon>malvids</taxon>
        <taxon>Brassicales</taxon>
        <taxon>Brassicaceae</taxon>
        <taxon>Camelineae</taxon>
        <taxon>Arabidopsis</taxon>
    </lineage>
</organism>
<proteinExistence type="evidence at transcript level"/>
<evidence type="ECO:0000255" key="1"/>
<evidence type="ECO:0000255" key="2">
    <source>
        <dbReference type="PROSITE-ProRule" id="PRU00498"/>
    </source>
</evidence>
<evidence type="ECO:0000255" key="3">
    <source>
        <dbReference type="PROSITE-ProRule" id="PRU01240"/>
    </source>
</evidence>
<evidence type="ECO:0000269" key="4">
    <source>
    </source>
</evidence>
<evidence type="ECO:0000303" key="5">
    <source>
    </source>
</evidence>
<evidence type="ECO:0000303" key="6">
    <source>
    </source>
</evidence>
<evidence type="ECO:0000305" key="7"/>
<evidence type="ECO:0000312" key="8">
    <source>
        <dbReference type="Araport" id="AT2G19170"/>
    </source>
</evidence>
<sequence length="815" mass="87667">MDIGLRIFVVFVLLVAVTAEVYIVTMEGDPIISYKGGENGFEATAVESDEKIDTSSELVTVYARHLERKHDMILGMLFEEGSYKKLYSYKHLINGFAAHVSPEQAETLRRAPGVRSVDKDWKVRRLTTHTPEFLGLPTDVWPTGGGFDRAGEDIVIGFVDSGIYPHHPSFASHHRLPYGPLPHYKGKCEEDPHTKKSFCNRKIVGAQHFAEAAKAAGAFNPDIDYASPMDGDGHGSHTAAIAAGNNGIPLRMHGYEFGKASGMAPRARIAVYKALYRLFGGFVADVVAAIDQAVHDGVDILSLSVGPNSPPTTTKTTFLNPFDATLLGAVKAGVFVAQAAGNGGPFPKTLVSYSPWITTVAAAIDDRRYKNHLTLGNGKMLAGMGLSPPTRPHRLYTLVSANDVLLDSSVSKYNPSDCQRPEVFNKKLVEGNILLCGYSFNFVVGTASIKKVVATAKHLGAAGFVLVVENVSPGTKFDPVPSAIPGILITDVSKSMDLIDYYNASTSRDWTGRVKSFKAEGSIGDGLAPVLHKSAPQVALFSARGPNTKDFSFQDADLLKPDILAPGYLIWAAWCPNGTDEPNYVGEGFALISGTSMAAPHIAGIAALVKQKHPQWSPAAIKSALMTTSTVIDRAGRLLQAQQYSDTEAVTLVKATPFDYGSGHVNPSAALDPGLIFDAGYEDYLGFLCTTPGISAHEIRNYTNTACNYDMKHPSNFNAPSIAVSHLVGTQTVTRKVTNVAEVEETYTITARMQPSIAIEVNPPAMTLRPGATRTFSVTMTVRSVSGVYSFGEVKLKGSRGHKVRIPVVALGHRR</sequence>
<gene>
    <name evidence="6" type="primary">SBT2.5</name>
    <name evidence="5" type="synonym">SLP3</name>
    <name evidence="8" type="ordered locus">At2g19170</name>
</gene>
<accession>O64481</accession>
<dbReference type="EC" id="3.4.21.-" evidence="7"/>
<dbReference type="EMBL" id="AC002392">
    <property type="protein sequence ID" value="AAD12040.1"/>
    <property type="molecule type" value="Genomic_DNA"/>
</dbReference>
<dbReference type="EMBL" id="CP002685">
    <property type="protein sequence ID" value="AEC06854.1"/>
    <property type="molecule type" value="Genomic_DNA"/>
</dbReference>
<dbReference type="EMBL" id="CP002685">
    <property type="protein sequence ID" value="ANM61987.1"/>
    <property type="molecule type" value="Genomic_DNA"/>
</dbReference>
<dbReference type="EMBL" id="AY051009">
    <property type="protein sequence ID" value="AAK93686.1"/>
    <property type="molecule type" value="mRNA"/>
</dbReference>
<dbReference type="EMBL" id="AY133826">
    <property type="protein sequence ID" value="AAM91760.1"/>
    <property type="molecule type" value="mRNA"/>
</dbReference>
<dbReference type="PIR" id="T00538">
    <property type="entry name" value="T00538"/>
</dbReference>
<dbReference type="RefSeq" id="NP_001324171.1">
    <property type="nucleotide sequence ID" value="NM_001335625.1"/>
</dbReference>
<dbReference type="RefSeq" id="NP_565447.1">
    <property type="nucleotide sequence ID" value="NM_127474.4"/>
</dbReference>
<dbReference type="SMR" id="O64481"/>
<dbReference type="FunCoup" id="O64481">
    <property type="interactions" value="168"/>
</dbReference>
<dbReference type="STRING" id="3702.O64481"/>
<dbReference type="MEROPS" id="S08.A02"/>
<dbReference type="GlyCosmos" id="O64481">
    <property type="glycosylation" value="3 sites, No reported glycans"/>
</dbReference>
<dbReference type="GlyGen" id="O64481">
    <property type="glycosylation" value="4 sites"/>
</dbReference>
<dbReference type="PaxDb" id="3702-AT2G19170.1"/>
<dbReference type="ProteomicsDB" id="232795"/>
<dbReference type="EnsemblPlants" id="AT2G19170.1">
    <property type="protein sequence ID" value="AT2G19170.1"/>
    <property type="gene ID" value="AT2G19170"/>
</dbReference>
<dbReference type="EnsemblPlants" id="AT2G19170.2">
    <property type="protein sequence ID" value="AT2G19170.2"/>
    <property type="gene ID" value="AT2G19170"/>
</dbReference>
<dbReference type="GeneID" id="816434"/>
<dbReference type="Gramene" id="AT2G19170.1">
    <property type="protein sequence ID" value="AT2G19170.1"/>
    <property type="gene ID" value="AT2G19170"/>
</dbReference>
<dbReference type="Gramene" id="AT2G19170.2">
    <property type="protein sequence ID" value="AT2G19170.2"/>
    <property type="gene ID" value="AT2G19170"/>
</dbReference>
<dbReference type="KEGG" id="ath:AT2G19170"/>
<dbReference type="Araport" id="AT2G19170"/>
<dbReference type="TAIR" id="AT2G19170">
    <property type="gene designation" value="SLP3"/>
</dbReference>
<dbReference type="eggNOG" id="ENOG502QS8I">
    <property type="taxonomic scope" value="Eukaryota"/>
</dbReference>
<dbReference type="HOGENOM" id="CLU_000625_3_1_1"/>
<dbReference type="InParanoid" id="O64481"/>
<dbReference type="OMA" id="NTPCNYD"/>
<dbReference type="OrthoDB" id="206201at2759"/>
<dbReference type="PhylomeDB" id="O64481"/>
<dbReference type="PRO" id="PR:O64481"/>
<dbReference type="Proteomes" id="UP000006548">
    <property type="component" value="Chromosome 2"/>
</dbReference>
<dbReference type="ExpressionAtlas" id="O64481">
    <property type="expression patterns" value="baseline and differential"/>
</dbReference>
<dbReference type="GO" id="GO:0016020">
    <property type="term" value="C:membrane"/>
    <property type="evidence" value="ECO:0007669"/>
    <property type="project" value="InterPro"/>
</dbReference>
<dbReference type="GO" id="GO:0004252">
    <property type="term" value="F:serine-type endopeptidase activity"/>
    <property type="evidence" value="ECO:0007669"/>
    <property type="project" value="InterPro"/>
</dbReference>
<dbReference type="GO" id="GO:0008236">
    <property type="term" value="F:serine-type peptidase activity"/>
    <property type="evidence" value="ECO:0000250"/>
    <property type="project" value="TAIR"/>
</dbReference>
<dbReference type="GO" id="GO:0006508">
    <property type="term" value="P:proteolysis"/>
    <property type="evidence" value="ECO:0007669"/>
    <property type="project" value="UniProtKB-KW"/>
</dbReference>
<dbReference type="CDD" id="cd02120">
    <property type="entry name" value="PA_subtilisin_like"/>
    <property type="match status" value="1"/>
</dbReference>
<dbReference type="CDD" id="cd04852">
    <property type="entry name" value="Peptidases_S8_3"/>
    <property type="match status" value="1"/>
</dbReference>
<dbReference type="FunFam" id="3.40.50.200:FF:000006">
    <property type="entry name" value="Subtilisin-like protease SBT1.5"/>
    <property type="match status" value="1"/>
</dbReference>
<dbReference type="FunFam" id="2.60.40.2310:FF:000003">
    <property type="entry name" value="Subtilisin-like protease SBT4.1"/>
    <property type="match status" value="1"/>
</dbReference>
<dbReference type="Gene3D" id="2.60.40.2310">
    <property type="match status" value="1"/>
</dbReference>
<dbReference type="Gene3D" id="3.50.30.30">
    <property type="match status" value="1"/>
</dbReference>
<dbReference type="Gene3D" id="3.30.70.80">
    <property type="entry name" value="Peptidase S8 propeptide/proteinase inhibitor I9"/>
    <property type="match status" value="1"/>
</dbReference>
<dbReference type="Gene3D" id="3.40.50.200">
    <property type="entry name" value="Peptidase S8/S53 domain"/>
    <property type="match status" value="1"/>
</dbReference>
<dbReference type="InterPro" id="IPR010435">
    <property type="entry name" value="C5a/SBT2-like_Fn3"/>
</dbReference>
<dbReference type="InterPro" id="IPR003137">
    <property type="entry name" value="PA_domain"/>
</dbReference>
<dbReference type="InterPro" id="IPR000209">
    <property type="entry name" value="Peptidase_S8/S53_dom"/>
</dbReference>
<dbReference type="InterPro" id="IPR036852">
    <property type="entry name" value="Peptidase_S8/S53_dom_sf"/>
</dbReference>
<dbReference type="InterPro" id="IPR023827">
    <property type="entry name" value="Peptidase_S8_Asp-AS"/>
</dbReference>
<dbReference type="InterPro" id="IPR023828">
    <property type="entry name" value="Peptidase_S8_Ser-AS"/>
</dbReference>
<dbReference type="InterPro" id="IPR015500">
    <property type="entry name" value="Peptidase_S8_subtilisin-rel"/>
</dbReference>
<dbReference type="InterPro" id="IPR034197">
    <property type="entry name" value="Peptidases_S8_3"/>
</dbReference>
<dbReference type="InterPro" id="IPR010259">
    <property type="entry name" value="S8pro/Inhibitor_I9"/>
</dbReference>
<dbReference type="InterPro" id="IPR037045">
    <property type="entry name" value="S8pro/Inhibitor_I9_sf"/>
</dbReference>
<dbReference type="InterPro" id="IPR045051">
    <property type="entry name" value="SBT"/>
</dbReference>
<dbReference type="PANTHER" id="PTHR10795">
    <property type="entry name" value="PROPROTEIN CONVERTASE SUBTILISIN/KEXIN"/>
    <property type="match status" value="1"/>
</dbReference>
<dbReference type="Pfam" id="PF06280">
    <property type="entry name" value="fn3_5"/>
    <property type="match status" value="1"/>
</dbReference>
<dbReference type="Pfam" id="PF05922">
    <property type="entry name" value="Inhibitor_I9"/>
    <property type="match status" value="1"/>
</dbReference>
<dbReference type="Pfam" id="PF02225">
    <property type="entry name" value="PA"/>
    <property type="match status" value="1"/>
</dbReference>
<dbReference type="Pfam" id="PF00082">
    <property type="entry name" value="Peptidase_S8"/>
    <property type="match status" value="1"/>
</dbReference>
<dbReference type="PRINTS" id="PR00723">
    <property type="entry name" value="SUBTILISIN"/>
</dbReference>
<dbReference type="SUPFAM" id="SSF54897">
    <property type="entry name" value="Protease propeptides/inhibitors"/>
    <property type="match status" value="1"/>
</dbReference>
<dbReference type="SUPFAM" id="SSF52743">
    <property type="entry name" value="Subtilisin-like"/>
    <property type="match status" value="1"/>
</dbReference>
<dbReference type="PROSITE" id="PS51892">
    <property type="entry name" value="SUBTILASE"/>
    <property type="match status" value="1"/>
</dbReference>
<dbReference type="PROSITE" id="PS00136">
    <property type="entry name" value="SUBTILASE_ASP"/>
    <property type="match status" value="1"/>
</dbReference>
<dbReference type="PROSITE" id="PS00138">
    <property type="entry name" value="SUBTILASE_SER"/>
    <property type="match status" value="1"/>
</dbReference>
<protein>
    <recommendedName>
        <fullName evidence="6">Subtilisin-like protease SBT2.5</fullName>
        <ecNumber evidence="7">3.4.21.-</ecNumber>
    </recommendedName>
    <alternativeName>
        <fullName evidence="6">Subtilase subfamily 2 member 5</fullName>
        <shortName evidence="6">AtSBT2.5</shortName>
    </alternativeName>
    <alternativeName>
        <fullName evidence="5">Subtilisin-like serine protease 3</fullName>
        <shortName evidence="5">At-SLP3</shortName>
    </alternativeName>
</protein>